<sequence>MKDNWMKYKDDSLVASFYDSQTTTFQEQGFETELAFGTAGIRGQFGLGPGRLNRYTIQRLALGIANYLKDKEDNPSIVIHYDIRHLSSEFAHIITQILTSKGIKVYLADVYKTTPQLSFAVRYLQTSAGIMITASHNPKDYNGIKVYGADGAQLDEDTSLEVAQYINNLGNPLELNIDLNQELIEKNTFDLQEAVYDSYINEITNLIGDIPQSDLKVVYTSLHGTGVPIIPDVLKHLNFQNVSLVELQCELDPNFSSVKSANPEEREAFDLAIQQAHDLEANLIIATDPDVDRMGFVERDTNGQTYYFGGSEIGALLIKYLLEYTNVPNHSVVIQSIVSGELGKRLAQQHEVTVKEVLIGFKHIAKAIRELDDTESFLFAYEESYGYLADDFVRDKDAIQIVPLIIKYTSILKNEGKTLHDALKEIHREVGQYRDKPMSKVFEGREGQQQINALMDKLRRNIPDVIAGLKVIAVEDYETLKRNYKEDNTEEAISLPQANVIRILFKEGFIALRPSGTEPKLKFYLSLNVDNFEQVSQDIYNYIFGDTE</sequence>
<feature type="chain" id="PRO_0000308347" description="Phosphoglucomutase">
    <location>
        <begin position="1"/>
        <end position="548"/>
    </location>
</feature>
<feature type="active site" description="Phosphoserine intermediate" evidence="1">
    <location>
        <position position="135"/>
    </location>
</feature>
<feature type="binding site" description="via phosphate group" evidence="1">
    <location>
        <position position="135"/>
    </location>
    <ligand>
        <name>Mg(2+)</name>
        <dbReference type="ChEBI" id="CHEBI:18420"/>
    </ligand>
</feature>
<feature type="binding site" evidence="1">
    <location>
        <position position="288"/>
    </location>
    <ligand>
        <name>Mg(2+)</name>
        <dbReference type="ChEBI" id="CHEBI:18420"/>
    </ligand>
</feature>
<feature type="binding site" evidence="1">
    <location>
        <position position="290"/>
    </location>
    <ligand>
        <name>Mg(2+)</name>
        <dbReference type="ChEBI" id="CHEBI:18420"/>
    </ligand>
</feature>
<feature type="binding site" evidence="1">
    <location>
        <position position="292"/>
    </location>
    <ligand>
        <name>Mg(2+)</name>
        <dbReference type="ChEBI" id="CHEBI:18420"/>
    </ligand>
</feature>
<keyword id="KW-0119">Carbohydrate metabolism</keyword>
<keyword id="KW-0313">Glucose metabolism</keyword>
<keyword id="KW-0413">Isomerase</keyword>
<keyword id="KW-0460">Magnesium</keyword>
<keyword id="KW-0479">Metal-binding</keyword>
<keyword id="KW-0597">Phosphoprotein</keyword>
<protein>
    <recommendedName>
        <fullName>Phosphoglucomutase</fullName>
        <shortName>PGM</shortName>
        <ecNumber>5.4.2.2</ecNumber>
    </recommendedName>
    <alternativeName>
        <fullName>Alpha-phosphoglucomutase</fullName>
    </alternativeName>
    <alternativeName>
        <fullName>Glucose phosphomutase</fullName>
    </alternativeName>
</protein>
<accession>Q4L9R5</accession>
<gene>
    <name type="primary">pgcA</name>
    <name type="ordered locus">SH0301</name>
</gene>
<evidence type="ECO:0000250" key="1"/>
<evidence type="ECO:0000305" key="2"/>
<reference key="1">
    <citation type="journal article" date="2005" name="J. Bacteriol.">
        <title>Whole-genome sequencing of Staphylococcus haemolyticus uncovers the extreme plasticity of its genome and the evolution of human-colonizing staphylococcal species.</title>
        <authorList>
            <person name="Takeuchi F."/>
            <person name="Watanabe S."/>
            <person name="Baba T."/>
            <person name="Yuzawa H."/>
            <person name="Ito T."/>
            <person name="Morimoto Y."/>
            <person name="Kuroda M."/>
            <person name="Cui L."/>
            <person name="Takahashi M."/>
            <person name="Ankai A."/>
            <person name="Baba S."/>
            <person name="Fukui S."/>
            <person name="Lee J.C."/>
            <person name="Hiramatsu K."/>
        </authorList>
    </citation>
    <scope>NUCLEOTIDE SEQUENCE [LARGE SCALE GENOMIC DNA]</scope>
    <source>
        <strain>JCSC1435</strain>
    </source>
</reference>
<proteinExistence type="inferred from homology"/>
<comment type="function">
    <text evidence="1">Catalyzes the interconversion between glucose-6-phosphate and alpha-glucose-1-phosphate. This is the first step in the biosynthesis of diglucosyl-diacylglycerol (Glc2-DAG), i.e. a glycolipid found in the membrane, which is also used as a membrane anchor for lipoteichoic acid (LTA) (By similarity).</text>
</comment>
<comment type="catalytic activity">
    <reaction>
        <text>alpha-D-glucose 1-phosphate = alpha-D-glucose 6-phosphate</text>
        <dbReference type="Rhea" id="RHEA:23536"/>
        <dbReference type="ChEBI" id="CHEBI:58225"/>
        <dbReference type="ChEBI" id="CHEBI:58601"/>
        <dbReference type="EC" id="5.4.2.2"/>
    </reaction>
</comment>
<comment type="cofactor">
    <cofactor evidence="1">
        <name>Mg(2+)</name>
        <dbReference type="ChEBI" id="CHEBI:18420"/>
    </cofactor>
    <text evidence="1">Binds 1 Mg(2+) ion per subunit.</text>
</comment>
<comment type="pathway">
    <text>Glycolipid metabolism; diglucosyl-diacylglycerol biosynthesis.</text>
</comment>
<comment type="similarity">
    <text evidence="2">Belongs to the phosphohexose mutase family.</text>
</comment>
<dbReference type="EC" id="5.4.2.2"/>
<dbReference type="EMBL" id="AP006716">
    <property type="protein sequence ID" value="BAE03610.1"/>
    <property type="molecule type" value="Genomic_DNA"/>
</dbReference>
<dbReference type="RefSeq" id="WP_011274630.1">
    <property type="nucleotide sequence ID" value="NC_007168.1"/>
</dbReference>
<dbReference type="SMR" id="Q4L9R5"/>
<dbReference type="KEGG" id="sha:SH0301"/>
<dbReference type="eggNOG" id="COG1109">
    <property type="taxonomic scope" value="Bacteria"/>
</dbReference>
<dbReference type="HOGENOM" id="CLU_016950_0_0_9"/>
<dbReference type="OrthoDB" id="9806956at2"/>
<dbReference type="UniPathway" id="UPA00894"/>
<dbReference type="Proteomes" id="UP000000543">
    <property type="component" value="Chromosome"/>
</dbReference>
<dbReference type="GO" id="GO:0000287">
    <property type="term" value="F:magnesium ion binding"/>
    <property type="evidence" value="ECO:0007669"/>
    <property type="project" value="InterPro"/>
</dbReference>
<dbReference type="GO" id="GO:0004614">
    <property type="term" value="F:phosphoglucomutase activity"/>
    <property type="evidence" value="ECO:0007669"/>
    <property type="project" value="UniProtKB-EC"/>
</dbReference>
<dbReference type="GO" id="GO:0008973">
    <property type="term" value="F:phosphopentomutase activity"/>
    <property type="evidence" value="ECO:0007669"/>
    <property type="project" value="TreeGrafter"/>
</dbReference>
<dbReference type="GO" id="GO:0009246">
    <property type="term" value="P:enterobacterial common antigen biosynthetic process"/>
    <property type="evidence" value="ECO:0007669"/>
    <property type="project" value="UniProtKB-UniPathway"/>
</dbReference>
<dbReference type="GO" id="GO:0006006">
    <property type="term" value="P:glucose metabolic process"/>
    <property type="evidence" value="ECO:0007669"/>
    <property type="project" value="UniProtKB-KW"/>
</dbReference>
<dbReference type="GO" id="GO:0006166">
    <property type="term" value="P:purine ribonucleoside salvage"/>
    <property type="evidence" value="ECO:0007669"/>
    <property type="project" value="TreeGrafter"/>
</dbReference>
<dbReference type="CDD" id="cd05799">
    <property type="entry name" value="PGM2"/>
    <property type="match status" value="1"/>
</dbReference>
<dbReference type="Gene3D" id="3.40.120.10">
    <property type="entry name" value="Alpha-D-Glucose-1,6-Bisphosphate, subunit A, domain 3"/>
    <property type="match status" value="3"/>
</dbReference>
<dbReference type="Gene3D" id="3.30.310.50">
    <property type="entry name" value="Alpha-D-phosphohexomutase, C-terminal domain"/>
    <property type="match status" value="1"/>
</dbReference>
<dbReference type="InterPro" id="IPR005844">
    <property type="entry name" value="A-D-PHexomutase_a/b/a-I"/>
</dbReference>
<dbReference type="InterPro" id="IPR016055">
    <property type="entry name" value="A-D-PHexomutase_a/b/a-I/II/III"/>
</dbReference>
<dbReference type="InterPro" id="IPR005845">
    <property type="entry name" value="A-D-PHexomutase_a/b/a-II"/>
</dbReference>
<dbReference type="InterPro" id="IPR005846">
    <property type="entry name" value="A-D-PHexomutase_a/b/a-III"/>
</dbReference>
<dbReference type="InterPro" id="IPR005843">
    <property type="entry name" value="A-D-PHexomutase_C"/>
</dbReference>
<dbReference type="InterPro" id="IPR036900">
    <property type="entry name" value="A-D-PHexomutase_C_sf"/>
</dbReference>
<dbReference type="InterPro" id="IPR016066">
    <property type="entry name" value="A-D-PHexomutase_CS"/>
</dbReference>
<dbReference type="InterPro" id="IPR005841">
    <property type="entry name" value="Alpha-D-phosphohexomutase_SF"/>
</dbReference>
<dbReference type="PANTHER" id="PTHR45745:SF1">
    <property type="entry name" value="PHOSPHOGLUCOMUTASE 2B-RELATED"/>
    <property type="match status" value="1"/>
</dbReference>
<dbReference type="PANTHER" id="PTHR45745">
    <property type="entry name" value="PHOSPHOMANNOMUTASE 45A"/>
    <property type="match status" value="1"/>
</dbReference>
<dbReference type="Pfam" id="PF02878">
    <property type="entry name" value="PGM_PMM_I"/>
    <property type="match status" value="1"/>
</dbReference>
<dbReference type="Pfam" id="PF02879">
    <property type="entry name" value="PGM_PMM_II"/>
    <property type="match status" value="1"/>
</dbReference>
<dbReference type="Pfam" id="PF02880">
    <property type="entry name" value="PGM_PMM_III"/>
    <property type="match status" value="1"/>
</dbReference>
<dbReference type="Pfam" id="PF00408">
    <property type="entry name" value="PGM_PMM_IV"/>
    <property type="match status" value="1"/>
</dbReference>
<dbReference type="PRINTS" id="PR00509">
    <property type="entry name" value="PGMPMM"/>
</dbReference>
<dbReference type="SUPFAM" id="SSF55957">
    <property type="entry name" value="Phosphoglucomutase, C-terminal domain"/>
    <property type="match status" value="1"/>
</dbReference>
<dbReference type="SUPFAM" id="SSF53738">
    <property type="entry name" value="Phosphoglucomutase, first 3 domains"/>
    <property type="match status" value="3"/>
</dbReference>
<dbReference type="PROSITE" id="PS00710">
    <property type="entry name" value="PGM_PMM"/>
    <property type="match status" value="1"/>
</dbReference>
<organism>
    <name type="scientific">Staphylococcus haemolyticus (strain JCSC1435)</name>
    <dbReference type="NCBI Taxonomy" id="279808"/>
    <lineage>
        <taxon>Bacteria</taxon>
        <taxon>Bacillati</taxon>
        <taxon>Bacillota</taxon>
        <taxon>Bacilli</taxon>
        <taxon>Bacillales</taxon>
        <taxon>Staphylococcaceae</taxon>
        <taxon>Staphylococcus</taxon>
    </lineage>
</organism>
<name>PGCA_STAHJ</name>